<name>YOAO_BACSU</name>
<feature type="signal peptide" evidence="1">
    <location>
        <begin position="1"/>
        <end position="34"/>
    </location>
</feature>
<feature type="chain" id="PRO_0000013716" description="Uncharacterized protein YoaO">
    <location>
        <begin position="35"/>
        <end position="162"/>
    </location>
</feature>
<gene>
    <name type="primary">yoaO</name>
    <name type="ordered locus">BSU18680</name>
</gene>
<organism>
    <name type="scientific">Bacillus subtilis (strain 168)</name>
    <dbReference type="NCBI Taxonomy" id="224308"/>
    <lineage>
        <taxon>Bacteria</taxon>
        <taxon>Bacillati</taxon>
        <taxon>Bacillota</taxon>
        <taxon>Bacilli</taxon>
        <taxon>Bacillales</taxon>
        <taxon>Bacillaceae</taxon>
        <taxon>Bacillus</taxon>
    </lineage>
</organism>
<dbReference type="EMBL" id="AF027868">
    <property type="protein sequence ID" value="AAB84451.1"/>
    <property type="molecule type" value="Genomic_DNA"/>
</dbReference>
<dbReference type="EMBL" id="AL009126">
    <property type="protein sequence ID" value="CAB13760.1"/>
    <property type="molecule type" value="Genomic_DNA"/>
</dbReference>
<dbReference type="PIR" id="H69896">
    <property type="entry name" value="H69896"/>
</dbReference>
<dbReference type="RefSeq" id="NP_389749.1">
    <property type="nucleotide sequence ID" value="NC_000964.3"/>
</dbReference>
<dbReference type="RefSeq" id="WP_004399262.1">
    <property type="nucleotide sequence ID" value="NZ_OZ025638.1"/>
</dbReference>
<dbReference type="SMR" id="O34985"/>
<dbReference type="FunCoup" id="O34985">
    <property type="interactions" value="155"/>
</dbReference>
<dbReference type="STRING" id="224308.BSU18680"/>
<dbReference type="PaxDb" id="224308-BSU18680"/>
<dbReference type="DNASU" id="940005"/>
<dbReference type="EnsemblBacteria" id="CAB13760">
    <property type="protein sequence ID" value="CAB13760"/>
    <property type="gene ID" value="BSU_18680"/>
</dbReference>
<dbReference type="GeneID" id="940005"/>
<dbReference type="KEGG" id="bsu:BSU18680"/>
<dbReference type="PATRIC" id="fig|224308.179.peg.2037"/>
<dbReference type="InParanoid" id="O34985"/>
<dbReference type="OrthoDB" id="2917129at2"/>
<dbReference type="BioCyc" id="BSUB:BSU18680-MONOMER"/>
<dbReference type="Proteomes" id="UP000001570">
    <property type="component" value="Chromosome"/>
</dbReference>
<dbReference type="InterPro" id="IPR032545">
    <property type="entry name" value="DUF4944"/>
</dbReference>
<dbReference type="Pfam" id="PF16302">
    <property type="entry name" value="DUF4944"/>
    <property type="match status" value="1"/>
</dbReference>
<accession>O34985</accession>
<protein>
    <recommendedName>
        <fullName>Uncharacterized protein YoaO</fullName>
    </recommendedName>
</protein>
<sequence length="162" mass="18924">MRKKNNIKKWLLIIAGFLIICIITLFVMVSGNKVKYEGSGKSGLWMSNLEKSDKTSIGPNYFLNLYWQGSKKEEKWTVVERITLYVDGEKYQDDNVDEYDLSEYTGDEMPGGGRMEDHISTFDYMPEDEVIGHDVLVKVEWRTGQKKQTEAIKLHKKPWYKK</sequence>
<reference key="1">
    <citation type="submission" date="1997-11" db="EMBL/GenBank/DDBJ databases">
        <title>Sequence analysis of the Bacillus subtilis chromosome region between the terC and odhAB loci cloned in a yeast artificial chromosome.</title>
        <authorList>
            <person name="Lapidus A."/>
            <person name="Galleron N."/>
            <person name="Sorokin A."/>
            <person name="Ehrlich S.D."/>
        </authorList>
    </citation>
    <scope>NUCLEOTIDE SEQUENCE [GENOMIC DNA]</scope>
</reference>
<reference key="2">
    <citation type="journal article" date="1997" name="Nature">
        <title>The complete genome sequence of the Gram-positive bacterium Bacillus subtilis.</title>
        <authorList>
            <person name="Kunst F."/>
            <person name="Ogasawara N."/>
            <person name="Moszer I."/>
            <person name="Albertini A.M."/>
            <person name="Alloni G."/>
            <person name="Azevedo V."/>
            <person name="Bertero M.G."/>
            <person name="Bessieres P."/>
            <person name="Bolotin A."/>
            <person name="Borchert S."/>
            <person name="Borriss R."/>
            <person name="Boursier L."/>
            <person name="Brans A."/>
            <person name="Braun M."/>
            <person name="Brignell S.C."/>
            <person name="Bron S."/>
            <person name="Brouillet S."/>
            <person name="Bruschi C.V."/>
            <person name="Caldwell B."/>
            <person name="Capuano V."/>
            <person name="Carter N.M."/>
            <person name="Choi S.-K."/>
            <person name="Codani J.-J."/>
            <person name="Connerton I.F."/>
            <person name="Cummings N.J."/>
            <person name="Daniel R.A."/>
            <person name="Denizot F."/>
            <person name="Devine K.M."/>
            <person name="Duesterhoeft A."/>
            <person name="Ehrlich S.D."/>
            <person name="Emmerson P.T."/>
            <person name="Entian K.-D."/>
            <person name="Errington J."/>
            <person name="Fabret C."/>
            <person name="Ferrari E."/>
            <person name="Foulger D."/>
            <person name="Fritz C."/>
            <person name="Fujita M."/>
            <person name="Fujita Y."/>
            <person name="Fuma S."/>
            <person name="Galizzi A."/>
            <person name="Galleron N."/>
            <person name="Ghim S.-Y."/>
            <person name="Glaser P."/>
            <person name="Goffeau A."/>
            <person name="Golightly E.J."/>
            <person name="Grandi G."/>
            <person name="Guiseppi G."/>
            <person name="Guy B.J."/>
            <person name="Haga K."/>
            <person name="Haiech J."/>
            <person name="Harwood C.R."/>
            <person name="Henaut A."/>
            <person name="Hilbert H."/>
            <person name="Holsappel S."/>
            <person name="Hosono S."/>
            <person name="Hullo M.-F."/>
            <person name="Itaya M."/>
            <person name="Jones L.-M."/>
            <person name="Joris B."/>
            <person name="Karamata D."/>
            <person name="Kasahara Y."/>
            <person name="Klaerr-Blanchard M."/>
            <person name="Klein C."/>
            <person name="Kobayashi Y."/>
            <person name="Koetter P."/>
            <person name="Koningstein G."/>
            <person name="Krogh S."/>
            <person name="Kumano M."/>
            <person name="Kurita K."/>
            <person name="Lapidus A."/>
            <person name="Lardinois S."/>
            <person name="Lauber J."/>
            <person name="Lazarevic V."/>
            <person name="Lee S.-M."/>
            <person name="Levine A."/>
            <person name="Liu H."/>
            <person name="Masuda S."/>
            <person name="Mauel C."/>
            <person name="Medigue C."/>
            <person name="Medina N."/>
            <person name="Mellado R.P."/>
            <person name="Mizuno M."/>
            <person name="Moestl D."/>
            <person name="Nakai S."/>
            <person name="Noback M."/>
            <person name="Noone D."/>
            <person name="O'Reilly M."/>
            <person name="Ogawa K."/>
            <person name="Ogiwara A."/>
            <person name="Oudega B."/>
            <person name="Park S.-H."/>
            <person name="Parro V."/>
            <person name="Pohl T.M."/>
            <person name="Portetelle D."/>
            <person name="Porwollik S."/>
            <person name="Prescott A.M."/>
            <person name="Presecan E."/>
            <person name="Pujic P."/>
            <person name="Purnelle B."/>
            <person name="Rapoport G."/>
            <person name="Rey M."/>
            <person name="Reynolds S."/>
            <person name="Rieger M."/>
            <person name="Rivolta C."/>
            <person name="Rocha E."/>
            <person name="Roche B."/>
            <person name="Rose M."/>
            <person name="Sadaie Y."/>
            <person name="Sato T."/>
            <person name="Scanlan E."/>
            <person name="Schleich S."/>
            <person name="Schroeter R."/>
            <person name="Scoffone F."/>
            <person name="Sekiguchi J."/>
            <person name="Sekowska A."/>
            <person name="Seror S.J."/>
            <person name="Serror P."/>
            <person name="Shin B.-S."/>
            <person name="Soldo B."/>
            <person name="Sorokin A."/>
            <person name="Tacconi E."/>
            <person name="Takagi T."/>
            <person name="Takahashi H."/>
            <person name="Takemaru K."/>
            <person name="Takeuchi M."/>
            <person name="Tamakoshi A."/>
            <person name="Tanaka T."/>
            <person name="Terpstra P."/>
            <person name="Tognoni A."/>
            <person name="Tosato V."/>
            <person name="Uchiyama S."/>
            <person name="Vandenbol M."/>
            <person name="Vannier F."/>
            <person name="Vassarotti A."/>
            <person name="Viari A."/>
            <person name="Wambutt R."/>
            <person name="Wedler E."/>
            <person name="Wedler H."/>
            <person name="Weitzenegger T."/>
            <person name="Winters P."/>
            <person name="Wipat A."/>
            <person name="Yamamoto H."/>
            <person name="Yamane K."/>
            <person name="Yasumoto K."/>
            <person name="Yata K."/>
            <person name="Yoshida K."/>
            <person name="Yoshikawa H.-F."/>
            <person name="Zumstein E."/>
            <person name="Yoshikawa H."/>
            <person name="Danchin A."/>
        </authorList>
    </citation>
    <scope>NUCLEOTIDE SEQUENCE [LARGE SCALE GENOMIC DNA]</scope>
    <source>
        <strain>168</strain>
    </source>
</reference>
<proteinExistence type="inferred from homology"/>
<keyword id="KW-1185">Reference proteome</keyword>
<keyword id="KW-0732">Signal</keyword>
<evidence type="ECO:0000255" key="1"/>